<comment type="similarity">
    <text evidence="2">Belongs to the universal ribosomal protein uL22 family.</text>
</comment>
<proteinExistence type="evidence at transcript level"/>
<organism>
    <name type="scientific">Maconellicoccus hirsutus</name>
    <name type="common">Pink hibiscus mealybug</name>
    <dbReference type="NCBI Taxonomy" id="177089"/>
    <lineage>
        <taxon>Eukaryota</taxon>
        <taxon>Metazoa</taxon>
        <taxon>Ecdysozoa</taxon>
        <taxon>Arthropoda</taxon>
        <taxon>Hexapoda</taxon>
        <taxon>Insecta</taxon>
        <taxon>Pterygota</taxon>
        <taxon>Neoptera</taxon>
        <taxon>Paraneoptera</taxon>
        <taxon>Hemiptera</taxon>
        <taxon>Sternorrhyncha</taxon>
        <taxon>Coccoidea</taxon>
        <taxon>Pseudococcidae</taxon>
        <taxon>Maconellicoccus</taxon>
    </lineage>
</organism>
<gene>
    <name type="primary">RpL17</name>
</gene>
<dbReference type="EMBL" id="EF070489">
    <property type="protein sequence ID" value="ABM55555.1"/>
    <property type="molecule type" value="mRNA"/>
</dbReference>
<dbReference type="SMR" id="A2I3Y6"/>
<dbReference type="GO" id="GO:0022625">
    <property type="term" value="C:cytosolic large ribosomal subunit"/>
    <property type="evidence" value="ECO:0007669"/>
    <property type="project" value="TreeGrafter"/>
</dbReference>
<dbReference type="GO" id="GO:0003735">
    <property type="term" value="F:structural constituent of ribosome"/>
    <property type="evidence" value="ECO:0007669"/>
    <property type="project" value="InterPro"/>
</dbReference>
<dbReference type="GO" id="GO:0002181">
    <property type="term" value="P:cytoplasmic translation"/>
    <property type="evidence" value="ECO:0007669"/>
    <property type="project" value="TreeGrafter"/>
</dbReference>
<dbReference type="CDD" id="cd00336">
    <property type="entry name" value="Ribosomal_L22"/>
    <property type="match status" value="1"/>
</dbReference>
<dbReference type="FunFam" id="3.90.470.10:FF:000003">
    <property type="entry name" value="60S ribosomal protein L17"/>
    <property type="match status" value="1"/>
</dbReference>
<dbReference type="Gene3D" id="3.90.470.10">
    <property type="entry name" value="Ribosomal protein L22/L17"/>
    <property type="match status" value="1"/>
</dbReference>
<dbReference type="HAMAP" id="MF_01331_A">
    <property type="entry name" value="Ribosomal_uL22_A"/>
    <property type="match status" value="1"/>
</dbReference>
<dbReference type="InterPro" id="IPR001063">
    <property type="entry name" value="Ribosomal_uL22"/>
</dbReference>
<dbReference type="InterPro" id="IPR018260">
    <property type="entry name" value="Ribosomal_uL22_CS"/>
</dbReference>
<dbReference type="InterPro" id="IPR005721">
    <property type="entry name" value="Ribosomal_uL22_euk/arc"/>
</dbReference>
<dbReference type="InterPro" id="IPR036394">
    <property type="entry name" value="Ribosomal_uL22_sf"/>
</dbReference>
<dbReference type="NCBIfam" id="NF003260">
    <property type="entry name" value="PRK04223.1"/>
    <property type="match status" value="1"/>
</dbReference>
<dbReference type="NCBIfam" id="TIGR01038">
    <property type="entry name" value="uL22_arch_euk"/>
    <property type="match status" value="1"/>
</dbReference>
<dbReference type="PANTHER" id="PTHR11593">
    <property type="entry name" value="60S RIBOSOMAL PROTEIN L17"/>
    <property type="match status" value="1"/>
</dbReference>
<dbReference type="PANTHER" id="PTHR11593:SF10">
    <property type="entry name" value="60S RIBOSOMAL PROTEIN L17"/>
    <property type="match status" value="1"/>
</dbReference>
<dbReference type="Pfam" id="PF00237">
    <property type="entry name" value="Ribosomal_L22"/>
    <property type="match status" value="1"/>
</dbReference>
<dbReference type="SUPFAM" id="SSF54843">
    <property type="entry name" value="Ribosomal protein L22"/>
    <property type="match status" value="1"/>
</dbReference>
<dbReference type="PROSITE" id="PS00464">
    <property type="entry name" value="RIBOSOMAL_L22"/>
    <property type="match status" value="1"/>
</dbReference>
<name>RL17_MACHI</name>
<accession>A2I3Y6</accession>
<keyword id="KW-0687">Ribonucleoprotein</keyword>
<keyword id="KW-0689">Ribosomal protein</keyword>
<sequence>MGKYAKNARNPAKSCRARGSNLRVHFKNTRETAKTIKRMPLRRAIQFLKNVQDKQECVPFRRFNGGVGRCAQAKQWGTTQGRWPIKSAQFLLELLRNAESNAEFKGLDSDRLFIEHIQVNRAPCLRRRTYRAHGRINPYMSSPCHIEVILTEKQKYVGKVSHDDSQKKKVSKKKLARQKEKMMRE</sequence>
<feature type="chain" id="PRO_0000323417" description="Large ribosomal subunit protein uL22">
    <location>
        <begin position="1"/>
        <end position="185"/>
    </location>
</feature>
<feature type="region of interest" description="Disordered" evidence="1">
    <location>
        <begin position="160"/>
        <end position="185"/>
    </location>
</feature>
<evidence type="ECO:0000256" key="1">
    <source>
        <dbReference type="SAM" id="MobiDB-lite"/>
    </source>
</evidence>
<evidence type="ECO:0000305" key="2"/>
<protein>
    <recommendedName>
        <fullName evidence="2">Large ribosomal subunit protein uL22</fullName>
    </recommendedName>
    <alternativeName>
        <fullName>60S ribosomal protein L17</fullName>
    </alternativeName>
</protein>
<reference key="1">
    <citation type="submission" date="2006-10" db="EMBL/GenBank/DDBJ databases">
        <title>Ribosomal proteins of the pink hibiscus mealybug, Maconellicoccus hirsutus.</title>
        <authorList>
            <person name="Hunter W.B."/>
            <person name="Hunnicutt L.E."/>
        </authorList>
    </citation>
    <scope>NUCLEOTIDE SEQUENCE [MRNA]</scope>
</reference>